<proteinExistence type="inferred from homology"/>
<feature type="initiator methionine" description="Removed" evidence="1">
    <location>
        <position position="1"/>
    </location>
</feature>
<feature type="chain" id="PRO_0000104285" description="Large ribosomal subunit protein uL11">
    <location>
        <begin position="2"/>
        <end position="142"/>
    </location>
</feature>
<feature type="modified residue" description="N,N,N-trimethylalanine" evidence="1">
    <location>
        <position position="2"/>
    </location>
</feature>
<feature type="modified residue" description="N6,N6,N6-trimethyllysine" evidence="1">
    <location>
        <position position="4"/>
    </location>
</feature>
<feature type="modified residue" description="N6,N6,N6-trimethyllysine" evidence="1">
    <location>
        <position position="40"/>
    </location>
</feature>
<comment type="function">
    <text evidence="2">Forms part of the ribosomal stalk which helps the ribosome interact with GTP-bound translation factors.</text>
</comment>
<comment type="subunit">
    <text evidence="2">Part of the ribosomal stalk of the 50S ribosomal subunit. Interacts with L10 and the large rRNA to form the base of the stalk. L10 forms an elongated spine to which L12 dimers bind in a sequential fashion forming a multimeric L10(L12)X complex.</text>
</comment>
<comment type="PTM">
    <text evidence="2">One or more lysine residues are methylated.</text>
</comment>
<comment type="similarity">
    <text evidence="2">Belongs to the universal ribosomal protein uL11 family.</text>
</comment>
<sequence length="142" mass="14875">MAKKVQAYVKLQVAAGMANPSPPVGPALGQQGVNIMEFCKAFNAKTDSIEKGLPIPVVITVYADRSFTFVTKTPPAAVLLKKAAGIKSGSGKPNKDKVGKISRAQLQEIAQTKAADMTGADIEAMTRSIEGTARSMGLVVED</sequence>
<protein>
    <recommendedName>
        <fullName evidence="2">Large ribosomal subunit protein uL11</fullName>
    </recommendedName>
    <alternativeName>
        <fullName evidence="3">50S ribosomal protein L11</fullName>
    </alternativeName>
</protein>
<organism>
    <name type="scientific">Escherichia coli O6:H1 (strain CFT073 / ATCC 700928 / UPEC)</name>
    <dbReference type="NCBI Taxonomy" id="199310"/>
    <lineage>
        <taxon>Bacteria</taxon>
        <taxon>Pseudomonadati</taxon>
        <taxon>Pseudomonadota</taxon>
        <taxon>Gammaproteobacteria</taxon>
        <taxon>Enterobacterales</taxon>
        <taxon>Enterobacteriaceae</taxon>
        <taxon>Escherichia</taxon>
    </lineage>
</organism>
<accession>P0A7J8</accession>
<accession>P02409</accession>
<accession>P76778</accession>
<reference key="1">
    <citation type="journal article" date="2002" name="Proc. Natl. Acad. Sci. U.S.A.">
        <title>Extensive mosaic structure revealed by the complete genome sequence of uropathogenic Escherichia coli.</title>
        <authorList>
            <person name="Welch R.A."/>
            <person name="Burland V."/>
            <person name="Plunkett G. III"/>
            <person name="Redford P."/>
            <person name="Roesch P."/>
            <person name="Rasko D."/>
            <person name="Buckles E.L."/>
            <person name="Liou S.-R."/>
            <person name="Boutin A."/>
            <person name="Hackett J."/>
            <person name="Stroud D."/>
            <person name="Mayhew G.F."/>
            <person name="Rose D.J."/>
            <person name="Zhou S."/>
            <person name="Schwartz D.C."/>
            <person name="Perna N.T."/>
            <person name="Mobley H.L.T."/>
            <person name="Donnenberg M.S."/>
            <person name="Blattner F.R."/>
        </authorList>
    </citation>
    <scope>NUCLEOTIDE SEQUENCE [LARGE SCALE GENOMIC DNA]</scope>
    <source>
        <strain>CFT073 / ATCC 700928 / UPEC</strain>
    </source>
</reference>
<keyword id="KW-0488">Methylation</keyword>
<keyword id="KW-1185">Reference proteome</keyword>
<keyword id="KW-0687">Ribonucleoprotein</keyword>
<keyword id="KW-0689">Ribosomal protein</keyword>
<keyword id="KW-0694">RNA-binding</keyword>
<keyword id="KW-0699">rRNA-binding</keyword>
<name>RL11_ECOL6</name>
<dbReference type="EMBL" id="AE014075">
    <property type="protein sequence ID" value="AAN83367.1"/>
    <property type="molecule type" value="Genomic_DNA"/>
</dbReference>
<dbReference type="RefSeq" id="WP_001085926.1">
    <property type="nucleotide sequence ID" value="NZ_CP051263.1"/>
</dbReference>
<dbReference type="SMR" id="P0A7J8"/>
<dbReference type="STRING" id="199310.c4939"/>
<dbReference type="GeneID" id="93777911"/>
<dbReference type="KEGG" id="ecc:c4939"/>
<dbReference type="eggNOG" id="COG0080">
    <property type="taxonomic scope" value="Bacteria"/>
</dbReference>
<dbReference type="HOGENOM" id="CLU_074237_2_0_6"/>
<dbReference type="BioCyc" id="ECOL199310:C4939-MONOMER"/>
<dbReference type="Proteomes" id="UP000001410">
    <property type="component" value="Chromosome"/>
</dbReference>
<dbReference type="GO" id="GO:0022625">
    <property type="term" value="C:cytosolic large ribosomal subunit"/>
    <property type="evidence" value="ECO:0007669"/>
    <property type="project" value="TreeGrafter"/>
</dbReference>
<dbReference type="GO" id="GO:0070180">
    <property type="term" value="F:large ribosomal subunit rRNA binding"/>
    <property type="evidence" value="ECO:0007669"/>
    <property type="project" value="UniProtKB-UniRule"/>
</dbReference>
<dbReference type="GO" id="GO:0003735">
    <property type="term" value="F:structural constituent of ribosome"/>
    <property type="evidence" value="ECO:0007669"/>
    <property type="project" value="InterPro"/>
</dbReference>
<dbReference type="GO" id="GO:0006412">
    <property type="term" value="P:translation"/>
    <property type="evidence" value="ECO:0007669"/>
    <property type="project" value="UniProtKB-UniRule"/>
</dbReference>
<dbReference type="CDD" id="cd00349">
    <property type="entry name" value="Ribosomal_L11"/>
    <property type="match status" value="1"/>
</dbReference>
<dbReference type="FunFam" id="1.10.10.250:FF:000001">
    <property type="entry name" value="50S ribosomal protein L11"/>
    <property type="match status" value="1"/>
</dbReference>
<dbReference type="FunFam" id="3.30.1550.10:FF:000001">
    <property type="entry name" value="50S ribosomal protein L11"/>
    <property type="match status" value="1"/>
</dbReference>
<dbReference type="Gene3D" id="1.10.10.250">
    <property type="entry name" value="Ribosomal protein L11, C-terminal domain"/>
    <property type="match status" value="1"/>
</dbReference>
<dbReference type="Gene3D" id="3.30.1550.10">
    <property type="entry name" value="Ribosomal protein L11/L12, N-terminal domain"/>
    <property type="match status" value="1"/>
</dbReference>
<dbReference type="HAMAP" id="MF_00736">
    <property type="entry name" value="Ribosomal_uL11"/>
    <property type="match status" value="1"/>
</dbReference>
<dbReference type="InterPro" id="IPR000911">
    <property type="entry name" value="Ribosomal_uL11"/>
</dbReference>
<dbReference type="InterPro" id="IPR006519">
    <property type="entry name" value="Ribosomal_uL11_bac-typ"/>
</dbReference>
<dbReference type="InterPro" id="IPR020783">
    <property type="entry name" value="Ribosomal_uL11_C"/>
</dbReference>
<dbReference type="InterPro" id="IPR036769">
    <property type="entry name" value="Ribosomal_uL11_C_sf"/>
</dbReference>
<dbReference type="InterPro" id="IPR020785">
    <property type="entry name" value="Ribosomal_uL11_CS"/>
</dbReference>
<dbReference type="InterPro" id="IPR020784">
    <property type="entry name" value="Ribosomal_uL11_N"/>
</dbReference>
<dbReference type="InterPro" id="IPR036796">
    <property type="entry name" value="Ribosomal_uL11_N_sf"/>
</dbReference>
<dbReference type="NCBIfam" id="TIGR01632">
    <property type="entry name" value="L11_bact"/>
    <property type="match status" value="1"/>
</dbReference>
<dbReference type="PANTHER" id="PTHR11661">
    <property type="entry name" value="60S RIBOSOMAL PROTEIN L12"/>
    <property type="match status" value="1"/>
</dbReference>
<dbReference type="PANTHER" id="PTHR11661:SF1">
    <property type="entry name" value="LARGE RIBOSOMAL SUBUNIT PROTEIN UL11M"/>
    <property type="match status" value="1"/>
</dbReference>
<dbReference type="Pfam" id="PF00298">
    <property type="entry name" value="Ribosomal_L11"/>
    <property type="match status" value="1"/>
</dbReference>
<dbReference type="Pfam" id="PF03946">
    <property type="entry name" value="Ribosomal_L11_N"/>
    <property type="match status" value="1"/>
</dbReference>
<dbReference type="SMART" id="SM00649">
    <property type="entry name" value="RL11"/>
    <property type="match status" value="1"/>
</dbReference>
<dbReference type="SUPFAM" id="SSF54747">
    <property type="entry name" value="Ribosomal L11/L12e N-terminal domain"/>
    <property type="match status" value="1"/>
</dbReference>
<dbReference type="SUPFAM" id="SSF46906">
    <property type="entry name" value="Ribosomal protein L11, C-terminal domain"/>
    <property type="match status" value="1"/>
</dbReference>
<dbReference type="PROSITE" id="PS00359">
    <property type="entry name" value="RIBOSOMAL_L11"/>
    <property type="match status" value="1"/>
</dbReference>
<gene>
    <name evidence="2" type="primary">rplK</name>
    <name type="ordered locus">c4939</name>
</gene>
<evidence type="ECO:0000250" key="1"/>
<evidence type="ECO:0000255" key="2">
    <source>
        <dbReference type="HAMAP-Rule" id="MF_00736"/>
    </source>
</evidence>
<evidence type="ECO:0000305" key="3"/>